<gene>
    <name type="primary">Wbp2</name>
</gene>
<protein>
    <recommendedName>
        <fullName>WW domain-binding protein 2</fullName>
        <shortName>WBP-2</shortName>
    </recommendedName>
</protein>
<feature type="chain" id="PRO_0000065951" description="WW domain-binding protein 2">
    <location>
        <begin position="1"/>
        <end position="261"/>
    </location>
</feature>
<feature type="domain" description="GRAM">
    <location>
        <begin position="1"/>
        <end position="84"/>
    </location>
</feature>
<feature type="region of interest" description="Disordered" evidence="2">
    <location>
        <begin position="196"/>
        <end position="261"/>
    </location>
</feature>
<feature type="short sequence motif" description="PPxY motif 1">
    <location>
        <begin position="196"/>
        <end position="200"/>
    </location>
</feature>
<feature type="short sequence motif" description="PPxY motif 2">
    <location>
        <begin position="248"/>
        <end position="252"/>
    </location>
</feature>
<feature type="compositionally biased region" description="Pro residues" evidence="2">
    <location>
        <begin position="196"/>
        <end position="209"/>
    </location>
</feature>
<feature type="compositionally biased region" description="Low complexity" evidence="2">
    <location>
        <begin position="210"/>
        <end position="230"/>
    </location>
</feature>
<feature type="compositionally biased region" description="Pro residues" evidence="2">
    <location>
        <begin position="245"/>
        <end position="254"/>
    </location>
</feature>
<feature type="modified residue" description="Phosphotyrosine" evidence="1">
    <location>
        <position position="192"/>
    </location>
</feature>
<feature type="modified residue" description="Phosphotyrosine" evidence="1">
    <location>
        <position position="231"/>
    </location>
</feature>
<feature type="splice variant" id="VSP_059234" description="In isoform 2.">
    <location>
        <begin position="133"/>
        <end position="177"/>
    </location>
</feature>
<feature type="mutagenesis site" description="No effect on interaction with NEDD4." evidence="3">
    <original>Y</original>
    <variation>A</variation>
    <location>
        <position position="170"/>
    </location>
</feature>
<feature type="mutagenesis site" description="Abolishes interaction with NEDD4." evidence="3">
    <original>Y</original>
    <variation>A</variation>
    <location>
        <position position="200"/>
    </location>
</feature>
<feature type="mutagenesis site" description="No effect on interaction with NEDD4." evidence="3">
    <original>Y</original>
    <variation>A</variation>
    <location>
        <position position="252"/>
    </location>
</feature>
<organism>
    <name type="scientific">Mus musculus</name>
    <name type="common">Mouse</name>
    <dbReference type="NCBI Taxonomy" id="10090"/>
    <lineage>
        <taxon>Eukaryota</taxon>
        <taxon>Metazoa</taxon>
        <taxon>Chordata</taxon>
        <taxon>Craniata</taxon>
        <taxon>Vertebrata</taxon>
        <taxon>Euteleostomi</taxon>
        <taxon>Mammalia</taxon>
        <taxon>Eutheria</taxon>
        <taxon>Euarchontoglires</taxon>
        <taxon>Glires</taxon>
        <taxon>Rodentia</taxon>
        <taxon>Myomorpha</taxon>
        <taxon>Muroidea</taxon>
        <taxon>Muridae</taxon>
        <taxon>Murinae</taxon>
        <taxon>Mus</taxon>
        <taxon>Mus</taxon>
    </lineage>
</organism>
<dbReference type="EMBL" id="U40826">
    <property type="protein sequence ID" value="AAB40893.1"/>
    <property type="molecule type" value="mRNA"/>
</dbReference>
<dbReference type="EMBL" id="AL607108">
    <property type="status" value="NOT_ANNOTATED_CDS"/>
    <property type="molecule type" value="Genomic_DNA"/>
</dbReference>
<dbReference type="EMBL" id="CH466558">
    <property type="protein sequence ID" value="EDL34550.1"/>
    <property type="molecule type" value="Genomic_DNA"/>
</dbReference>
<dbReference type="EMBL" id="BC055058">
    <property type="protein sequence ID" value="AAH55058.1"/>
    <property type="molecule type" value="mRNA"/>
</dbReference>
<dbReference type="CCDS" id="CCDS25657.1">
    <molecule id="P97765-1"/>
</dbReference>
<dbReference type="CCDS" id="CCDS83934.1">
    <molecule id="P97765-2"/>
</dbReference>
<dbReference type="RefSeq" id="NP_001334571.1">
    <molecule id="P97765-2"/>
    <property type="nucleotide sequence ID" value="NM_001347642.1"/>
</dbReference>
<dbReference type="RefSeq" id="NP_058548.1">
    <molecule id="P97765-1"/>
    <property type="nucleotide sequence ID" value="NM_016852.3"/>
</dbReference>
<dbReference type="SMR" id="P97765"/>
<dbReference type="BioGRID" id="204546">
    <property type="interactions" value="9"/>
</dbReference>
<dbReference type="FunCoup" id="P97765">
    <property type="interactions" value="3382"/>
</dbReference>
<dbReference type="IntAct" id="P97765">
    <property type="interactions" value="2"/>
</dbReference>
<dbReference type="MINT" id="P97765"/>
<dbReference type="STRING" id="10090.ENSMUSP00000074204"/>
<dbReference type="GlyGen" id="P97765">
    <property type="glycosylation" value="5 sites, 1 O-linked glycan (4 sites)"/>
</dbReference>
<dbReference type="iPTMnet" id="P97765"/>
<dbReference type="PhosphoSitePlus" id="P97765"/>
<dbReference type="jPOST" id="P97765"/>
<dbReference type="PaxDb" id="10090-ENSMUSP00000074204"/>
<dbReference type="PeptideAtlas" id="P97765"/>
<dbReference type="ProteomicsDB" id="297632">
    <molecule id="P97765-1"/>
</dbReference>
<dbReference type="ProteomicsDB" id="297633">
    <molecule id="P97765-2"/>
</dbReference>
<dbReference type="Pumba" id="P97765"/>
<dbReference type="Antibodypedia" id="32285">
    <property type="antibodies" value="140 antibodies from 26 providers"/>
</dbReference>
<dbReference type="Ensembl" id="ENSMUST00000074628.13">
    <molecule id="P97765-1"/>
    <property type="protein sequence ID" value="ENSMUSP00000074204.7"/>
    <property type="gene ID" value="ENSMUSG00000034341.18"/>
</dbReference>
<dbReference type="Ensembl" id="ENSMUST00000106444.4">
    <molecule id="P97765-2"/>
    <property type="protein sequence ID" value="ENSMUSP00000102052.4"/>
    <property type="gene ID" value="ENSMUSG00000034341.18"/>
</dbReference>
<dbReference type="GeneID" id="22378"/>
<dbReference type="KEGG" id="mmu:22378"/>
<dbReference type="UCSC" id="uc007mjv.1">
    <molecule id="P97765-1"/>
    <property type="organism name" value="mouse"/>
</dbReference>
<dbReference type="AGR" id="MGI:104709"/>
<dbReference type="CTD" id="23558"/>
<dbReference type="MGI" id="MGI:104709">
    <property type="gene designation" value="Wbp2"/>
</dbReference>
<dbReference type="VEuPathDB" id="HostDB:ENSMUSG00000034341"/>
<dbReference type="eggNOG" id="KOG3294">
    <property type="taxonomic scope" value="Eukaryota"/>
</dbReference>
<dbReference type="GeneTree" id="ENSGT00530000063718"/>
<dbReference type="InParanoid" id="P97765"/>
<dbReference type="OMA" id="PYPGINA"/>
<dbReference type="OrthoDB" id="1259151at2759"/>
<dbReference type="PhylomeDB" id="P97765"/>
<dbReference type="TreeFam" id="TF314141"/>
<dbReference type="BioGRID-ORCS" id="22378">
    <property type="hits" value="1 hit in 77 CRISPR screens"/>
</dbReference>
<dbReference type="ChiTaRS" id="Wbp2">
    <property type="organism name" value="mouse"/>
</dbReference>
<dbReference type="PRO" id="PR:P97765"/>
<dbReference type="Proteomes" id="UP000000589">
    <property type="component" value="Chromosome 11"/>
</dbReference>
<dbReference type="RNAct" id="P97765">
    <property type="molecule type" value="protein"/>
</dbReference>
<dbReference type="Bgee" id="ENSMUSG00000034341">
    <property type="expression patterns" value="Expressed in primary visual cortex and 267 other cell types or tissues"/>
</dbReference>
<dbReference type="ExpressionAtlas" id="P97765">
    <property type="expression patterns" value="baseline and differential"/>
</dbReference>
<dbReference type="GO" id="GO:0000785">
    <property type="term" value="C:chromatin"/>
    <property type="evidence" value="ECO:0007669"/>
    <property type="project" value="Ensembl"/>
</dbReference>
<dbReference type="GO" id="GO:0005737">
    <property type="term" value="C:cytoplasm"/>
    <property type="evidence" value="ECO:0000250"/>
    <property type="project" value="UniProtKB"/>
</dbReference>
<dbReference type="GO" id="GO:0005829">
    <property type="term" value="C:cytosol"/>
    <property type="evidence" value="ECO:0007669"/>
    <property type="project" value="Ensembl"/>
</dbReference>
<dbReference type="GO" id="GO:0005654">
    <property type="term" value="C:nucleoplasm"/>
    <property type="evidence" value="ECO:0007669"/>
    <property type="project" value="Ensembl"/>
</dbReference>
<dbReference type="GO" id="GO:0005634">
    <property type="term" value="C:nucleus"/>
    <property type="evidence" value="ECO:0000250"/>
    <property type="project" value="UniProtKB"/>
</dbReference>
<dbReference type="GO" id="GO:0031490">
    <property type="term" value="F:chromatin DNA binding"/>
    <property type="evidence" value="ECO:0007669"/>
    <property type="project" value="Ensembl"/>
</dbReference>
<dbReference type="GO" id="GO:0030331">
    <property type="term" value="F:nuclear estrogen receptor binding"/>
    <property type="evidence" value="ECO:0007669"/>
    <property type="project" value="Ensembl"/>
</dbReference>
<dbReference type="GO" id="GO:0000978">
    <property type="term" value="F:RNA polymerase II cis-regulatory region sequence-specific DNA binding"/>
    <property type="evidence" value="ECO:0007669"/>
    <property type="project" value="Ensembl"/>
</dbReference>
<dbReference type="GO" id="GO:0003713">
    <property type="term" value="F:transcription coactivator activity"/>
    <property type="evidence" value="ECO:0000250"/>
    <property type="project" value="UniProtKB"/>
</dbReference>
<dbReference type="GO" id="GO:0071391">
    <property type="term" value="P:cellular response to estrogen stimulus"/>
    <property type="evidence" value="ECO:0007669"/>
    <property type="project" value="Ensembl"/>
</dbReference>
<dbReference type="GO" id="GO:0071169">
    <property type="term" value="P:establishment of protein localization to chromatin"/>
    <property type="evidence" value="ECO:0007669"/>
    <property type="project" value="Ensembl"/>
</dbReference>
<dbReference type="GO" id="GO:0033148">
    <property type="term" value="P:positive regulation of intracellular estrogen receptor signaling pathway"/>
    <property type="evidence" value="ECO:0000250"/>
    <property type="project" value="UniProtKB"/>
</dbReference>
<dbReference type="GO" id="GO:0045944">
    <property type="term" value="P:positive regulation of transcription by RNA polymerase II"/>
    <property type="evidence" value="ECO:0007669"/>
    <property type="project" value="Ensembl"/>
</dbReference>
<dbReference type="GO" id="GO:0050847">
    <property type="term" value="P:progesterone receptor signaling pathway"/>
    <property type="evidence" value="ECO:0000250"/>
    <property type="project" value="UniProtKB"/>
</dbReference>
<dbReference type="GO" id="GO:0043627">
    <property type="term" value="P:response to estrogen"/>
    <property type="evidence" value="ECO:0000250"/>
    <property type="project" value="UniProtKB"/>
</dbReference>
<dbReference type="GO" id="GO:0032570">
    <property type="term" value="P:response to progesterone"/>
    <property type="evidence" value="ECO:0000250"/>
    <property type="project" value="UniProtKB"/>
</dbReference>
<dbReference type="GO" id="GO:0045815">
    <property type="term" value="P:transcription initiation-coupled chromatin remodeling"/>
    <property type="evidence" value="ECO:0007669"/>
    <property type="project" value="Ensembl"/>
</dbReference>
<dbReference type="CDD" id="cd13214">
    <property type="entry name" value="PH-GRAM_WBP2"/>
    <property type="match status" value="1"/>
</dbReference>
<dbReference type="InterPro" id="IPR004182">
    <property type="entry name" value="GRAM"/>
</dbReference>
<dbReference type="InterPro" id="IPR044852">
    <property type="entry name" value="WBP2-like"/>
</dbReference>
<dbReference type="PANTHER" id="PTHR31606">
    <property type="entry name" value="WW DOMAIN BINDING PROTEIN 2, ISOFORM E"/>
    <property type="match status" value="1"/>
</dbReference>
<dbReference type="PANTHER" id="PTHR31606:SF4">
    <property type="entry name" value="WW DOMAIN-BINDING PROTEIN 2"/>
    <property type="match status" value="1"/>
</dbReference>
<dbReference type="Pfam" id="PF02893">
    <property type="entry name" value="GRAM"/>
    <property type="match status" value="1"/>
</dbReference>
<dbReference type="SUPFAM" id="SSF50729">
    <property type="entry name" value="PH domain-like"/>
    <property type="match status" value="1"/>
</dbReference>
<reference key="1">
    <citation type="journal article" date="1995" name="Proc. Natl. Acad. Sci. U.S.A.">
        <title>The WW domain of Yes-associated protein binds a proline-rich ligand that differs from the consensus established for Src homology 3-binding modules.</title>
        <authorList>
            <person name="Chen H.I."/>
            <person name="Sudol M."/>
        </authorList>
    </citation>
    <scope>NUCLEOTIDE SEQUENCE [MRNA]</scope>
    <scope>INTERACTION WITH YAP1</scope>
</reference>
<reference key="2">
    <citation type="journal article" date="2009" name="PLoS Biol.">
        <title>Lineage-specific biology revealed by a finished genome assembly of the mouse.</title>
        <authorList>
            <person name="Church D.M."/>
            <person name="Goodstadt L."/>
            <person name="Hillier L.W."/>
            <person name="Zody M.C."/>
            <person name="Goldstein S."/>
            <person name="She X."/>
            <person name="Bult C.J."/>
            <person name="Agarwala R."/>
            <person name="Cherry J.L."/>
            <person name="DiCuccio M."/>
            <person name="Hlavina W."/>
            <person name="Kapustin Y."/>
            <person name="Meric P."/>
            <person name="Maglott D."/>
            <person name="Birtle Z."/>
            <person name="Marques A.C."/>
            <person name="Graves T."/>
            <person name="Zhou S."/>
            <person name="Teague B."/>
            <person name="Potamousis K."/>
            <person name="Churas C."/>
            <person name="Place M."/>
            <person name="Herschleb J."/>
            <person name="Runnheim R."/>
            <person name="Forrest D."/>
            <person name="Amos-Landgraf J."/>
            <person name="Schwartz D.C."/>
            <person name="Cheng Z."/>
            <person name="Lindblad-Toh K."/>
            <person name="Eichler E.E."/>
            <person name="Ponting C.P."/>
        </authorList>
    </citation>
    <scope>NUCLEOTIDE SEQUENCE [LARGE SCALE GENOMIC DNA]</scope>
    <source>
        <strain>C57BL/6J</strain>
    </source>
</reference>
<reference key="3">
    <citation type="submission" date="2005-07" db="EMBL/GenBank/DDBJ databases">
        <authorList>
            <person name="Mural R.J."/>
            <person name="Adams M.D."/>
            <person name="Myers E.W."/>
            <person name="Smith H.O."/>
            <person name="Venter J.C."/>
        </authorList>
    </citation>
    <scope>NUCLEOTIDE SEQUENCE [LARGE SCALE GENOMIC DNA]</scope>
    <source>
        <strain>C57BL/6J</strain>
    </source>
</reference>
<reference key="4">
    <citation type="journal article" date="2004" name="Genome Res.">
        <title>The status, quality, and expansion of the NIH full-length cDNA project: the Mammalian Gene Collection (MGC).</title>
        <authorList>
            <consortium name="The MGC Project Team"/>
        </authorList>
    </citation>
    <scope>NUCLEOTIDE SEQUENCE [LARGE SCALE MRNA]</scope>
    <source>
        <strain>FVB/N</strain>
        <tissue>Colon</tissue>
    </source>
</reference>
<reference key="5">
    <citation type="journal article" date="2000" name="Biochem. J.">
        <title>Identification of multiple proteins expressed in murine embryos as binding partners for the WW domains of the ubiquitin-protein ligase Nedd4.</title>
        <authorList>
            <person name="Jolliffe C.N."/>
            <person name="Harvey K.F."/>
            <person name="Haines B.P."/>
            <person name="Parasivam G."/>
            <person name="Kumar S."/>
        </authorList>
    </citation>
    <scope>INTERACTION WITH NEDD4</scope>
    <scope>DOMAINS</scope>
    <scope>MUTAGENESIS OF TYR-170; TYR-200 AND TYR-252</scope>
    <source>
        <tissue>Embryo</tissue>
    </source>
</reference>
<reference key="6">
    <citation type="journal article" date="2010" name="Cell">
        <title>A tissue-specific atlas of mouse protein phosphorylation and expression.</title>
        <authorList>
            <person name="Huttlin E.L."/>
            <person name="Jedrychowski M.P."/>
            <person name="Elias J.E."/>
            <person name="Goswami T."/>
            <person name="Rad R."/>
            <person name="Beausoleil S.A."/>
            <person name="Villen J."/>
            <person name="Haas W."/>
            <person name="Sowa M.E."/>
            <person name="Gygi S.P."/>
        </authorList>
    </citation>
    <scope>IDENTIFICATION BY MASS SPECTROMETRY [LARGE SCALE ANALYSIS]</scope>
    <source>
        <tissue>Brain</tissue>
        <tissue>Heart</tissue>
        <tissue>Kidney</tissue>
        <tissue>Liver</tissue>
        <tissue>Lung</tissue>
        <tissue>Pancreas</tissue>
        <tissue>Spleen</tissue>
        <tissue>Testis</tissue>
    </source>
</reference>
<reference key="7">
    <citation type="journal article" date="2016" name="EMBO Mol. Med.">
        <title>Wbp2 is required for normal glutamatergic synapses in the cochlea and is crucial for hearing.</title>
        <authorList>
            <person name="Buniello A."/>
            <person name="Ingham N.J."/>
            <person name="Lewis M.A."/>
            <person name="Huma A.C."/>
            <person name="Martinez-Vega R."/>
            <person name="Varela-Nieto I."/>
            <person name="Vizcay-Barrena G."/>
            <person name="Fleck R.A."/>
            <person name="Houston O."/>
            <person name="Bardhan T."/>
            <person name="Johnson S.L."/>
            <person name="White J.K."/>
            <person name="Yuan H."/>
            <person name="Marcotti W."/>
            <person name="Steel K.P."/>
        </authorList>
    </citation>
    <scope>FUNCTION</scope>
    <scope>DISRUPTION PHENOTYPE</scope>
    <scope>TISSUE SPECIFICITY</scope>
    <scope>ALTERNATIVE SPLICING</scope>
</reference>
<proteinExistence type="evidence at protein level"/>
<accession>P97765</accession>
<accession>A2A860</accession>
<name>WBP2_MOUSE</name>
<keyword id="KW-0025">Alternative splicing</keyword>
<keyword id="KW-0963">Cytoplasm</keyword>
<keyword id="KW-0539">Nucleus</keyword>
<keyword id="KW-0597">Phosphoprotein</keyword>
<keyword id="KW-1185">Reference proteome</keyword>
<keyword id="KW-0677">Repeat</keyword>
<sequence>MALNKNHSEGGGVIVNNTESILMSYDHVELTFNDMKNVPEAFKGTKKGTVYLTPYRVIFLSKGKDAMQSFMMPFYLMKDCEIKQPVFGANFIKGIVKAEAGGGWEGSASYKLTFTAGGAIEFGQRMLQVASQASRGEVPNGAYGYPYMPSGAYVFPPPVANGMYPCPPGYPYPPPPPEFYPGPPMMDGAMGYVQPPPPPYPGPMEPPVSGPSAPATPAAEAKAAEAAASAYYNPGNPHNVYMPTSQPPPPPYYPPEDKKTQ</sequence>
<comment type="function">
    <text evidence="1 4">Acts as a transcriptional coactivator of estrogen and progesterone receptors (ESR1 and PGR) upon hormone activation. In presence of estrogen, binds to ESR1-responsive promoters. Synergizes with YAP1 to enhance PGR activity (By similarity). Modulates expression of post-synaptic scaffolding proteins via regulation of ESR1, ESR2 and PGR (PubMed:26881968).</text>
</comment>
<comment type="subunit">
    <text evidence="1 3 5">Binds to the WW domain of YAP1, WWP1 and WWP2 (By similarity) (PubMed:7644498). Interacts with NEDD4 (PubMed:11042109). Interacts with ESR1 and UBE3A (By similarity).</text>
</comment>
<comment type="interaction">
    <interactant intactId="EBI-6304181">
        <id>P97765</id>
    </interactant>
    <interactant intactId="EBI-773516">
        <id>P46935</id>
        <label>Nedd4</label>
    </interactant>
    <organismsDiffer>false</organismsDiffer>
    <experiments>5</experiments>
</comment>
<comment type="subcellular location">
    <subcellularLocation>
        <location evidence="1">Cytoplasm</location>
    </subcellularLocation>
    <subcellularLocation>
        <location evidence="1">Nucleus</location>
    </subcellularLocation>
    <text evidence="1">Translocates from cytoplasm to nucleus when phosphorylated.</text>
</comment>
<comment type="alternative products">
    <event type="alternative splicing"/>
    <isoform>
        <id>P97765-1</id>
        <name>1</name>
        <sequence type="displayed"/>
    </isoform>
    <isoform>
        <id>P97765-2</id>
        <name>2</name>
        <sequence type="described" ref="VSP_059234"/>
    </isoform>
</comment>
<comment type="tissue specificity">
    <text evidence="4">Expressed in the ear and the eye (PubMed:26881968). Isoform 1 is expressed in brain, inner ear and organ of Corti. Isoform 2 is only detected in brain (PubMed:26881968).</text>
</comment>
<comment type="domain">
    <text evidence="1 3">The PPxY motif 1 mediates interaction with NEDD4 (PubMed:11042109). The PPxY motif 2 is required for the coactivation function (By similarity).</text>
</comment>
<comment type="PTM">
    <text evidence="1">Phosphorylated in repsonse to EGF as well as estrogen and progesterone hormones. Tyr-192 and Tyr-231 are phosphorylated by YES and SRC inducing nuclear translocation.</text>
</comment>
<comment type="disruption phenotype">
    <text evidence="4">Mutant animals have a progressive high-frequency hearing loss (PubMed:26881968). They show swelling of afferent terminals and abnormal expression of AMPA receptor subunit at post-synaptic densities (PubMed:26881968). Mice are fertile and show no other abnormalities (PubMed:26881968).</text>
</comment>
<evidence type="ECO:0000250" key="1">
    <source>
        <dbReference type="UniProtKB" id="Q969T9"/>
    </source>
</evidence>
<evidence type="ECO:0000256" key="2">
    <source>
        <dbReference type="SAM" id="MobiDB-lite"/>
    </source>
</evidence>
<evidence type="ECO:0000269" key="3">
    <source>
    </source>
</evidence>
<evidence type="ECO:0000269" key="4">
    <source>
    </source>
</evidence>
<evidence type="ECO:0000269" key="5">
    <source>
    </source>
</evidence>